<feature type="chain" id="PRO_0000182752" description="Glutamate dehydrogenase">
    <location>
        <begin position="1"/>
        <end position="411"/>
    </location>
</feature>
<feature type="active site" evidence="1">
    <location>
        <position position="102"/>
    </location>
</feature>
<accession>P52596</accession>
<keyword id="KW-0520">NAD</keyword>
<keyword id="KW-0560">Oxidoreductase</keyword>
<dbReference type="EC" id="1.4.1.3"/>
<dbReference type="EMBL" id="X86924">
    <property type="protein sequence ID" value="CAA60507.1"/>
    <property type="molecule type" value="mRNA"/>
</dbReference>
<dbReference type="PIR" id="S54797">
    <property type="entry name" value="S54797"/>
</dbReference>
<dbReference type="RefSeq" id="NP_001268039.1">
    <property type="nucleotide sequence ID" value="NM_001281110.1"/>
</dbReference>
<dbReference type="SMR" id="P52596"/>
<dbReference type="PaxDb" id="29760-VIT_16s0039g02750.t01"/>
<dbReference type="GeneID" id="100257914"/>
<dbReference type="KEGG" id="vvi:100257914"/>
<dbReference type="eggNOG" id="KOG2250">
    <property type="taxonomic scope" value="Eukaryota"/>
</dbReference>
<dbReference type="OrthoDB" id="670827at71240"/>
<dbReference type="ExpressionAtlas" id="P52596">
    <property type="expression patterns" value="baseline and differential"/>
</dbReference>
<dbReference type="GO" id="GO:0004352">
    <property type="term" value="F:glutamate dehydrogenase (NAD+) activity"/>
    <property type="evidence" value="ECO:0007669"/>
    <property type="project" value="RHEA"/>
</dbReference>
<dbReference type="GO" id="GO:0004354">
    <property type="term" value="F:glutamate dehydrogenase (NADP+) activity"/>
    <property type="evidence" value="ECO:0007669"/>
    <property type="project" value="RHEA"/>
</dbReference>
<dbReference type="GO" id="GO:0006520">
    <property type="term" value="P:amino acid metabolic process"/>
    <property type="evidence" value="ECO:0007669"/>
    <property type="project" value="InterPro"/>
</dbReference>
<dbReference type="CDD" id="cd01076">
    <property type="entry name" value="NAD_bind_1_Glu_DH"/>
    <property type="match status" value="1"/>
</dbReference>
<dbReference type="FunFam" id="3.40.50.10860:FF:000003">
    <property type="entry name" value="Glutamate dehydrogenase"/>
    <property type="match status" value="1"/>
</dbReference>
<dbReference type="FunFam" id="3.40.50.720:FF:000212">
    <property type="entry name" value="Glutamate dehydrogenase"/>
    <property type="match status" value="1"/>
</dbReference>
<dbReference type="Gene3D" id="3.40.50.10860">
    <property type="entry name" value="Leucine Dehydrogenase, chain A, domain 1"/>
    <property type="match status" value="1"/>
</dbReference>
<dbReference type="Gene3D" id="3.40.50.720">
    <property type="entry name" value="NAD(P)-binding Rossmann-like Domain"/>
    <property type="match status" value="1"/>
</dbReference>
<dbReference type="InterPro" id="IPR046346">
    <property type="entry name" value="Aminoacid_DH-like_N_sf"/>
</dbReference>
<dbReference type="InterPro" id="IPR006095">
    <property type="entry name" value="Glu/Leu/Phe/Val/Trp_DH"/>
</dbReference>
<dbReference type="InterPro" id="IPR006096">
    <property type="entry name" value="Glu/Leu/Phe/Val/Trp_DH_C"/>
</dbReference>
<dbReference type="InterPro" id="IPR006097">
    <property type="entry name" value="Glu/Leu/Phe/Val/Trp_DH_dimer"/>
</dbReference>
<dbReference type="InterPro" id="IPR033524">
    <property type="entry name" value="Glu/Leu/Phe/Val_DH_AS"/>
</dbReference>
<dbReference type="InterPro" id="IPR014362">
    <property type="entry name" value="Glu_DH"/>
</dbReference>
<dbReference type="InterPro" id="IPR036291">
    <property type="entry name" value="NAD(P)-bd_dom_sf"/>
</dbReference>
<dbReference type="InterPro" id="IPR033922">
    <property type="entry name" value="NAD_bind_Glu_DH"/>
</dbReference>
<dbReference type="PANTHER" id="PTHR11606">
    <property type="entry name" value="GLUTAMATE DEHYDROGENASE"/>
    <property type="match status" value="1"/>
</dbReference>
<dbReference type="PANTHER" id="PTHR11606:SF24">
    <property type="entry name" value="NAD-SPECIFIC GLUTAMATE DEHYDROGENASE"/>
    <property type="match status" value="1"/>
</dbReference>
<dbReference type="Pfam" id="PF00208">
    <property type="entry name" value="ELFV_dehydrog"/>
    <property type="match status" value="1"/>
</dbReference>
<dbReference type="Pfam" id="PF02812">
    <property type="entry name" value="ELFV_dehydrog_N"/>
    <property type="match status" value="1"/>
</dbReference>
<dbReference type="PIRSF" id="PIRSF000185">
    <property type="entry name" value="Glu_DH"/>
    <property type="match status" value="1"/>
</dbReference>
<dbReference type="PRINTS" id="PR00082">
    <property type="entry name" value="GLFDHDRGNASE"/>
</dbReference>
<dbReference type="SMART" id="SM00839">
    <property type="entry name" value="ELFV_dehydrog"/>
    <property type="match status" value="1"/>
</dbReference>
<dbReference type="SUPFAM" id="SSF53223">
    <property type="entry name" value="Aminoacid dehydrogenase-like, N-terminal domain"/>
    <property type="match status" value="1"/>
</dbReference>
<dbReference type="SUPFAM" id="SSF51735">
    <property type="entry name" value="NAD(P)-binding Rossmann-fold domains"/>
    <property type="match status" value="1"/>
</dbReference>
<dbReference type="PROSITE" id="PS00074">
    <property type="entry name" value="GLFV_DEHYDROGENASE"/>
    <property type="match status" value="1"/>
</dbReference>
<proteinExistence type="evidence at transcript level"/>
<name>DHE3_VITVI</name>
<gene>
    <name type="primary">GDH</name>
</gene>
<reference key="1">
    <citation type="journal article" date="1996" name="Gene">
        <title>The amino-acid sequence similarity of plant glutamate dehydrogenase to the extremophilic archaeal enzyme conforms to its stress-related function.</title>
        <authorList>
            <person name="Syntichaki K.M."/>
            <person name="Loulakakis K.A."/>
            <person name="Roubelakis-Angelakis K.A."/>
        </authorList>
    </citation>
    <scope>NUCLEOTIDE SEQUENCE [MRNA]</scope>
    <source>
        <strain>cv. Sultanina</strain>
        <tissue>Shoot</tissue>
    </source>
</reference>
<organism>
    <name type="scientific">Vitis vinifera</name>
    <name type="common">Grape</name>
    <dbReference type="NCBI Taxonomy" id="29760"/>
    <lineage>
        <taxon>Eukaryota</taxon>
        <taxon>Viridiplantae</taxon>
        <taxon>Streptophyta</taxon>
        <taxon>Embryophyta</taxon>
        <taxon>Tracheophyta</taxon>
        <taxon>Spermatophyta</taxon>
        <taxon>Magnoliopsida</taxon>
        <taxon>eudicotyledons</taxon>
        <taxon>Gunneridae</taxon>
        <taxon>Pentapetalae</taxon>
        <taxon>rosids</taxon>
        <taxon>Vitales</taxon>
        <taxon>Vitaceae</taxon>
        <taxon>Viteae</taxon>
        <taxon>Vitis</taxon>
    </lineage>
</organism>
<comment type="catalytic activity">
    <reaction evidence="1">
        <text>L-glutamate + NAD(+) + H2O = 2-oxoglutarate + NH4(+) + NADH + H(+)</text>
        <dbReference type="Rhea" id="RHEA:15133"/>
        <dbReference type="ChEBI" id="CHEBI:15377"/>
        <dbReference type="ChEBI" id="CHEBI:15378"/>
        <dbReference type="ChEBI" id="CHEBI:16810"/>
        <dbReference type="ChEBI" id="CHEBI:28938"/>
        <dbReference type="ChEBI" id="CHEBI:29985"/>
        <dbReference type="ChEBI" id="CHEBI:57540"/>
        <dbReference type="ChEBI" id="CHEBI:57945"/>
        <dbReference type="EC" id="1.4.1.3"/>
    </reaction>
</comment>
<comment type="catalytic activity">
    <reaction evidence="1">
        <text>L-glutamate + NADP(+) + H2O = 2-oxoglutarate + NH4(+) + NADPH + H(+)</text>
        <dbReference type="Rhea" id="RHEA:11612"/>
        <dbReference type="ChEBI" id="CHEBI:15377"/>
        <dbReference type="ChEBI" id="CHEBI:15378"/>
        <dbReference type="ChEBI" id="CHEBI:16810"/>
        <dbReference type="ChEBI" id="CHEBI:28938"/>
        <dbReference type="ChEBI" id="CHEBI:29985"/>
        <dbReference type="ChEBI" id="CHEBI:57783"/>
        <dbReference type="ChEBI" id="CHEBI:58349"/>
        <dbReference type="EC" id="1.4.1.3"/>
    </reaction>
</comment>
<comment type="similarity">
    <text evidence="2">Belongs to the Glu/Leu/Phe/Val dehydrogenases family.</text>
</comment>
<protein>
    <recommendedName>
        <fullName>Glutamate dehydrogenase</fullName>
        <shortName>GDH</shortName>
        <ecNumber>1.4.1.3</ecNumber>
    </recommendedName>
</protein>
<evidence type="ECO:0000255" key="1">
    <source>
        <dbReference type="PROSITE-ProRule" id="PRU10011"/>
    </source>
</evidence>
<evidence type="ECO:0000305" key="2"/>
<sequence>MNALAATNRNFRHASRILGLDSKLEKSLLIPFREIKVECTIPKDDGSLATYVGFRVQHDNARGPMKGGIRYHPEVDPDEVNALAQLMTWKTAVVDIPYGGAKGGIGCTPKDLSMSELERLTRVFTQKIHDLIGTHTDVPAPDMGTNAQTMAWILDEYSKFHGHSPAVVTGKPIALGGSLGREAATGRGVVFATEALLAQHGKSIKGLTFVIQGFGNVGSWVARLIGERGGKIIAVSDVTGAVKNQNGLDIVDLLRHKEETGCLTNFSGGDHMDPNELLTHECDVLIPCALGGVLNKENAADVKAKFIIEAANHPTDPEADEILSKKGGVILPDIYANAGGVTVSYFEWVQNIQGFMWEEEKVNNELQKYMTKAFHNIKAMCQSHNCSLRMGAFTLAVNRVACATTLRGWEA</sequence>